<proteinExistence type="evidence at protein level"/>
<feature type="chain" id="PRO_0000437372" description="Type VII secretion system extracellular protein A">
    <location>
        <begin position="1"/>
        <end position="97"/>
    </location>
</feature>
<feature type="coiled-coil region" evidence="2">
    <location>
        <begin position="61"/>
        <end position="93"/>
    </location>
</feature>
<feature type="mutagenesis site" description="Almost 75% loss of secretion." evidence="4">
    <location>
        <begin position="90"/>
        <end position="97"/>
    </location>
</feature>
<name>ESXA_STAA3</name>
<reference key="1">
    <citation type="journal article" date="2006" name="Lancet">
        <title>Complete genome sequence of USA300, an epidemic clone of community-acquired meticillin-resistant Staphylococcus aureus.</title>
        <authorList>
            <person name="Diep B.A."/>
            <person name="Gill S.R."/>
            <person name="Chang R.F."/>
            <person name="Phan T.H."/>
            <person name="Chen J.H."/>
            <person name="Davidson M.G."/>
            <person name="Lin F."/>
            <person name="Lin J."/>
            <person name="Carleton H.A."/>
            <person name="Mongodin E.F."/>
            <person name="Sensabaugh G.F."/>
            <person name="Perdreau-Remington F."/>
        </authorList>
    </citation>
    <scope>NUCLEOTIDE SEQUENCE [LARGE SCALE GENOMIC DNA]</scope>
    <source>
        <strain>USA300</strain>
    </source>
</reference>
<reference key="2">
    <citation type="journal article" date="2013" name="Mol. Microbiol.">
        <title>Secretion of atypical protein substrates by the ESAT-6 secretion system of Staphylococcus aureus.</title>
        <authorList>
            <person name="Anderson M."/>
            <person name="Aly K.A."/>
            <person name="Chen Y.H."/>
            <person name="Missiakas D."/>
        </authorList>
    </citation>
    <scope>SUBUNIT</scope>
    <scope>SUBCELLULAR LOCATION</scope>
    <source>
        <strain>USA300</strain>
    </source>
</reference>
<reference key="3">
    <citation type="journal article" date="2014" name="Infect. Immun.">
        <title>Staphylococcal Esx proteins modulate apoptosis and release of intracellular Staphylococcus aureus during infection in epithelial cells.</title>
        <authorList>
            <person name="Korea C.G."/>
            <person name="Balsamo G."/>
            <person name="Pezzicoli A."/>
            <person name="Merakou C."/>
            <person name="Tavarini S."/>
            <person name="Bagnoli F."/>
            <person name="Serruto D."/>
            <person name="Unnikrishnan M."/>
        </authorList>
    </citation>
    <scope>FUNCTION</scope>
    <scope>DISRUPTION PHENOTYPE</scope>
    <scope>MUTAGENESIS OF 90-LEU--GLN-97</scope>
    <scope>SUBCELLULAR LOCATION</scope>
    <source>
        <strain>USA300</strain>
    </source>
</reference>
<reference key="4">
    <citation type="journal article" date="2017" name="Front. Cell. Infect. Microbiol.">
        <title>Staphylococcus aureus Esx Factors Control Human Dendritic Cell Functions Conditioning Th1/Th17 Response.</title>
        <authorList>
            <person name="Cruciani M."/>
            <person name="Etna M.P."/>
            <person name="Camilli R."/>
            <person name="Giacomini E."/>
            <person name="Percario Z.A."/>
            <person name="Severa M."/>
            <person name="Sandini S."/>
            <person name="Rizzo F."/>
            <person name="Brandi V."/>
            <person name="Balsamo G."/>
            <person name="Polticelli F."/>
            <person name="Affabris E."/>
            <person name="Pantosti A."/>
            <person name="Bagnoli F."/>
            <person name="Coccia E.M."/>
        </authorList>
    </citation>
    <scope>FUNCTION</scope>
    <scope>DISRUPTION PHENOTYPE</scope>
    <source>
        <strain>USA300</strain>
    </source>
</reference>
<sequence length="97" mass="11036">MAMIKMSPEEIRAKSQSYGQGSDQIRQILSDLTRAQGEIAANWEGQAFSRFEEQFQQLSPKVEKFAQLLEEIKQQLNSTADAVQEQDQQLSNNFGLQ</sequence>
<evidence type="ECO:0000250" key="1">
    <source>
        <dbReference type="UniProtKB" id="P0C046"/>
    </source>
</evidence>
<evidence type="ECO:0000255" key="2"/>
<evidence type="ECO:0000269" key="3">
    <source>
    </source>
</evidence>
<evidence type="ECO:0000269" key="4">
    <source>
    </source>
</evidence>
<evidence type="ECO:0000269" key="5">
    <source>
    </source>
</evidence>
<evidence type="ECO:0000303" key="6">
    <source>
    </source>
</evidence>
<evidence type="ECO:0000305" key="7"/>
<evidence type="ECO:0000312" key="8">
    <source>
        <dbReference type="EMBL" id="ABD21786.1"/>
    </source>
</evidence>
<comment type="function">
    <text evidence="1 4 5">Virulence factor that is important for the establishment of infection in the host. EsxA is required for EsxB synthesis as well as secretion (By similarity). Modulates host cell apoptotic pathways and mediates together with EsxB the release of S.aureus from the host cell (PubMed:25047846). By acting on apoptosis, plays a role in the modulation of dendritic cell-mediated immunity (PubMed:28785545).</text>
</comment>
<comment type="subunit">
    <text evidence="3">Forms both homodimers and heterodimers with EsxC.</text>
</comment>
<comment type="subcellular location">
    <subcellularLocation>
        <location evidence="3 4">Secreted</location>
    </subcellularLocation>
    <text evidence="7">Secreted via the ESAT-6 secretion system (Ess) / type VII secretion system (T7SS).</text>
</comment>
<comment type="disruption phenotype">
    <text evidence="4 5">Significant increased of early and late apoptotic host cells including infected epithelial cells or dendritic cells.</text>
</comment>
<comment type="similarity">
    <text evidence="7">Belongs to the WXG100 family. sagEsxA-like subfamily.</text>
</comment>
<keyword id="KW-0175">Coiled coil</keyword>
<keyword id="KW-0964">Secreted</keyword>
<keyword id="KW-0843">Virulence</keyword>
<gene>
    <name evidence="6" type="primary">esxA</name>
    <name evidence="8" type="ordered locus">SAUSA300_0278</name>
</gene>
<protein>
    <recommendedName>
        <fullName evidence="7">Type VII secretion system extracellular protein A</fullName>
        <shortName evidence="7">Ess extracellular protein A</shortName>
    </recommendedName>
</protein>
<organism>
    <name type="scientific">Staphylococcus aureus (strain USA300)</name>
    <dbReference type="NCBI Taxonomy" id="367830"/>
    <lineage>
        <taxon>Bacteria</taxon>
        <taxon>Bacillati</taxon>
        <taxon>Bacillota</taxon>
        <taxon>Bacilli</taxon>
        <taxon>Bacillales</taxon>
        <taxon>Staphylococcaceae</taxon>
        <taxon>Staphylococcus</taxon>
    </lineage>
</organism>
<accession>A0A0H2XI99</accession>
<dbReference type="EMBL" id="CP000255">
    <property type="protein sequence ID" value="ABD21786.1"/>
    <property type="molecule type" value="Genomic_DNA"/>
</dbReference>
<dbReference type="RefSeq" id="WP_001240826.1">
    <property type="nucleotide sequence ID" value="NZ_CP027476.1"/>
</dbReference>
<dbReference type="SMR" id="A0A0H2XI99"/>
<dbReference type="GeneID" id="98344606"/>
<dbReference type="KEGG" id="saa:SAUSA300_0278"/>
<dbReference type="HOGENOM" id="CLU_158563_4_0_9"/>
<dbReference type="OMA" id="SDLKGMW"/>
<dbReference type="Proteomes" id="UP000001939">
    <property type="component" value="Chromosome"/>
</dbReference>
<dbReference type="GO" id="GO:0005576">
    <property type="term" value="C:extracellular region"/>
    <property type="evidence" value="ECO:0007669"/>
    <property type="project" value="UniProtKB-SubCell"/>
</dbReference>
<dbReference type="Gene3D" id="1.10.287.1060">
    <property type="entry name" value="ESAT-6-like"/>
    <property type="match status" value="1"/>
</dbReference>
<dbReference type="InterPro" id="IPR036689">
    <property type="entry name" value="ESAT-6-like_sf"/>
</dbReference>
<dbReference type="InterPro" id="IPR010310">
    <property type="entry name" value="T7SS_ESAT-6-like"/>
</dbReference>
<dbReference type="NCBIfam" id="TIGR03930">
    <property type="entry name" value="WXG100_ESAT6"/>
    <property type="match status" value="1"/>
</dbReference>
<dbReference type="Pfam" id="PF06013">
    <property type="entry name" value="WXG100"/>
    <property type="match status" value="1"/>
</dbReference>
<dbReference type="SUPFAM" id="SSF140453">
    <property type="entry name" value="EsxAB dimer-like"/>
    <property type="match status" value="1"/>
</dbReference>